<protein>
    <recommendedName>
        <fullName>Cytochrome c oxidase subunit 2</fullName>
        <ecNumber>7.1.1.9</ecNumber>
    </recommendedName>
    <alternativeName>
        <fullName>Cytochrome c oxidase polypeptide II</fullName>
    </alternativeName>
</protein>
<proteinExistence type="inferred from homology"/>
<keyword id="KW-0186">Copper</keyword>
<keyword id="KW-0249">Electron transport</keyword>
<keyword id="KW-0460">Magnesium</keyword>
<keyword id="KW-0472">Membrane</keyword>
<keyword id="KW-0479">Metal-binding</keyword>
<keyword id="KW-0496">Mitochondrion</keyword>
<keyword id="KW-0999">Mitochondrion inner membrane</keyword>
<keyword id="KW-0679">Respiratory chain</keyword>
<keyword id="KW-1278">Translocase</keyword>
<keyword id="KW-0812">Transmembrane</keyword>
<keyword id="KW-1133">Transmembrane helix</keyword>
<keyword id="KW-0813">Transport</keyword>
<sequence length="237" mass="27154">MNLVAPTPWGLFFQDSATPQMEGIEELHNNIMFYLTIILFSVTWMMITIIKSFVNTKSPISHKYMNHGTLIELIWTITPAVILILIAFPSFKLLYLMDEVMDPSLVIYGEGHQWYWSYQYPDFTNADGEFVEFDSYIVPESDLEEGTLRMLEVDNRVIIPELTHTRFVISAADVIHSFACPSLGIKCDAYPGRLNQSSVYLNRQGTYFGQCSEICGILHSSMPIVIQSVSLKNFYYD</sequence>
<accession>Q01556</accession>
<geneLocation type="mitochondrion"/>
<dbReference type="EC" id="7.1.1.9"/>
<dbReference type="EMBL" id="X65223">
    <property type="protein sequence ID" value="CAA46327.1"/>
    <property type="molecule type" value="Genomic_DNA"/>
</dbReference>
<dbReference type="PIR" id="S26949">
    <property type="entry name" value="S26949"/>
</dbReference>
<dbReference type="SMR" id="Q01556"/>
<dbReference type="GO" id="GO:0005743">
    <property type="term" value="C:mitochondrial inner membrane"/>
    <property type="evidence" value="ECO:0007669"/>
    <property type="project" value="UniProtKB-SubCell"/>
</dbReference>
<dbReference type="GO" id="GO:0005507">
    <property type="term" value="F:copper ion binding"/>
    <property type="evidence" value="ECO:0007669"/>
    <property type="project" value="InterPro"/>
</dbReference>
<dbReference type="GO" id="GO:0004129">
    <property type="term" value="F:cytochrome-c oxidase activity"/>
    <property type="evidence" value="ECO:0007669"/>
    <property type="project" value="UniProtKB-EC"/>
</dbReference>
<dbReference type="GO" id="GO:0042773">
    <property type="term" value="P:ATP synthesis coupled electron transport"/>
    <property type="evidence" value="ECO:0007669"/>
    <property type="project" value="TreeGrafter"/>
</dbReference>
<dbReference type="CDD" id="cd13912">
    <property type="entry name" value="CcO_II_C"/>
    <property type="match status" value="1"/>
</dbReference>
<dbReference type="FunFam" id="1.10.287.90:FF:000004">
    <property type="entry name" value="Cytochrome c oxidase subunit 2"/>
    <property type="match status" value="1"/>
</dbReference>
<dbReference type="FunFam" id="2.60.40.420:FF:000001">
    <property type="entry name" value="Cytochrome c oxidase subunit 2"/>
    <property type="match status" value="1"/>
</dbReference>
<dbReference type="Gene3D" id="1.10.287.90">
    <property type="match status" value="1"/>
</dbReference>
<dbReference type="Gene3D" id="2.60.40.420">
    <property type="entry name" value="Cupredoxins - blue copper proteins"/>
    <property type="match status" value="1"/>
</dbReference>
<dbReference type="InterPro" id="IPR045187">
    <property type="entry name" value="CcO_II"/>
</dbReference>
<dbReference type="InterPro" id="IPR002429">
    <property type="entry name" value="CcO_II-like_C"/>
</dbReference>
<dbReference type="InterPro" id="IPR034210">
    <property type="entry name" value="CcO_II_C"/>
</dbReference>
<dbReference type="InterPro" id="IPR001505">
    <property type="entry name" value="Copper_CuA"/>
</dbReference>
<dbReference type="InterPro" id="IPR008972">
    <property type="entry name" value="Cupredoxin"/>
</dbReference>
<dbReference type="InterPro" id="IPR011759">
    <property type="entry name" value="Cyt_c_oxidase_su2_TM_dom"/>
</dbReference>
<dbReference type="InterPro" id="IPR036257">
    <property type="entry name" value="Cyt_c_oxidase_su2_TM_sf"/>
</dbReference>
<dbReference type="PANTHER" id="PTHR22888:SF9">
    <property type="entry name" value="CYTOCHROME C OXIDASE SUBUNIT 2"/>
    <property type="match status" value="1"/>
</dbReference>
<dbReference type="PANTHER" id="PTHR22888">
    <property type="entry name" value="CYTOCHROME C OXIDASE, SUBUNIT II"/>
    <property type="match status" value="1"/>
</dbReference>
<dbReference type="Pfam" id="PF00116">
    <property type="entry name" value="COX2"/>
    <property type="match status" value="1"/>
</dbReference>
<dbReference type="Pfam" id="PF02790">
    <property type="entry name" value="COX2_TM"/>
    <property type="match status" value="1"/>
</dbReference>
<dbReference type="PRINTS" id="PR01166">
    <property type="entry name" value="CYCOXIDASEII"/>
</dbReference>
<dbReference type="SUPFAM" id="SSF49503">
    <property type="entry name" value="Cupredoxins"/>
    <property type="match status" value="1"/>
</dbReference>
<dbReference type="SUPFAM" id="SSF81464">
    <property type="entry name" value="Cytochrome c oxidase subunit II-like, transmembrane region"/>
    <property type="match status" value="1"/>
</dbReference>
<dbReference type="PROSITE" id="PS00078">
    <property type="entry name" value="COX2"/>
    <property type="match status" value="1"/>
</dbReference>
<dbReference type="PROSITE" id="PS50857">
    <property type="entry name" value="COX2_CUA"/>
    <property type="match status" value="1"/>
</dbReference>
<dbReference type="PROSITE" id="PS50999">
    <property type="entry name" value="COX2_TM"/>
    <property type="match status" value="1"/>
</dbReference>
<gene>
    <name type="primary">COX2</name>
</gene>
<comment type="function">
    <text evidence="1">Component of the cytochrome c oxidase, the last enzyme in the mitochondrial electron transport chain which drives oxidative phosphorylation. The respiratory chain contains 3 multisubunit complexes succinate dehydrogenase (complex II, CII), ubiquinol-cytochrome c oxidoreductase (cytochrome b-c1 complex, complex III, CIII) and cytochrome c oxidase (complex IV, CIV), that cooperate to transfer electrons derived from NADH and succinate to molecular oxygen, creating an electrochemical gradient over the inner membrane that drives transmembrane transport and the ATP synthase. Cytochrome c oxidase is the component of the respiratory chain that catalyzes the reduction of oxygen to water. Electrons originating from reduced cytochrome c in the intermembrane space (IMS) are transferred via the dinuclear copper A center (CU(A)) of subunit 2 and heme A of subunit 1 to the active site in subunit 1, a binuclear center (BNC) formed by heme A3 and copper B (CU(B)). The BNC reduces molecular oxygen to 2 water molecules using 4 electrons from cytochrome c in the IMS and 4 protons from the mitochondrial matrix.</text>
</comment>
<comment type="catalytic activity">
    <reaction evidence="1">
        <text>4 Fe(II)-[cytochrome c] + O2 + 8 H(+)(in) = 4 Fe(III)-[cytochrome c] + 2 H2O + 4 H(+)(out)</text>
        <dbReference type="Rhea" id="RHEA:11436"/>
        <dbReference type="Rhea" id="RHEA-COMP:10350"/>
        <dbReference type="Rhea" id="RHEA-COMP:14399"/>
        <dbReference type="ChEBI" id="CHEBI:15377"/>
        <dbReference type="ChEBI" id="CHEBI:15378"/>
        <dbReference type="ChEBI" id="CHEBI:15379"/>
        <dbReference type="ChEBI" id="CHEBI:29033"/>
        <dbReference type="ChEBI" id="CHEBI:29034"/>
        <dbReference type="EC" id="7.1.1.9"/>
    </reaction>
    <physiologicalReaction direction="left-to-right" evidence="1">
        <dbReference type="Rhea" id="RHEA:11437"/>
    </physiologicalReaction>
</comment>
<comment type="cofactor">
    <cofactor evidence="1">
        <name>Cu cation</name>
        <dbReference type="ChEBI" id="CHEBI:23378"/>
    </cofactor>
    <text evidence="1">Binds a dinuclear copper A center per subunit.</text>
</comment>
<comment type="subunit">
    <text evidence="1">Component of the cytochrome c oxidase (complex IV, CIV), a multisubunit enzyme composed of a catalytic core of 3 subunits and several supernumerary subunits. The complex exists as a monomer or a dimer and forms supercomplexes (SCs) in the inner mitochondrial membrane with ubiquinol-cytochrome c oxidoreductase (cytochrome b-c1 complex, complex III, CIII).</text>
</comment>
<comment type="subcellular location">
    <subcellularLocation>
        <location evidence="1">Mitochondrion inner membrane</location>
        <topology evidence="1">Multi-pass membrane protein</topology>
    </subcellularLocation>
</comment>
<comment type="similarity">
    <text evidence="3">Belongs to the cytochrome c oxidase subunit 2 family.</text>
</comment>
<reference key="1">
    <citation type="journal article" date="1992" name="Curr. Genet.">
        <title>Mitochondrial DNA sequence analysis of the cytochrome oxidase subunit I and II genes, the ATPase9 gene, the NADH dehydrogenase ND4L and ND5 gene complex, and the glutaminyl, methionyl and arginyl tRNA genes from Trichophyton rubrum.</title>
        <authorList>
            <person name="de Bievre C."/>
            <person name="Dujon B."/>
        </authorList>
    </citation>
    <scope>NUCLEOTIDE SEQUENCE [GENOMIC DNA]</scope>
    <source>
        <strain>IP 1817.89</strain>
    </source>
</reference>
<organism>
    <name type="scientific">Trichophyton rubrum</name>
    <name type="common">Athlete's foot fungus</name>
    <name type="synonym">Epidermophyton rubrum</name>
    <dbReference type="NCBI Taxonomy" id="5551"/>
    <lineage>
        <taxon>Eukaryota</taxon>
        <taxon>Fungi</taxon>
        <taxon>Dikarya</taxon>
        <taxon>Ascomycota</taxon>
        <taxon>Pezizomycotina</taxon>
        <taxon>Eurotiomycetes</taxon>
        <taxon>Eurotiomycetidae</taxon>
        <taxon>Onygenales</taxon>
        <taxon>Arthrodermataceae</taxon>
        <taxon>Trichophyton</taxon>
    </lineage>
</organism>
<evidence type="ECO:0000250" key="1">
    <source>
        <dbReference type="UniProtKB" id="P00410"/>
    </source>
</evidence>
<evidence type="ECO:0000255" key="2"/>
<evidence type="ECO:0000305" key="3"/>
<name>COX2_TRIRU</name>
<feature type="chain" id="PRO_0000183706" description="Cytochrome c oxidase subunit 2">
    <location>
        <begin position="1"/>
        <end position="237"/>
    </location>
</feature>
<feature type="topological domain" description="Mitochondrial intermembrane" evidence="2">
    <location>
        <begin position="1"/>
        <end position="30"/>
    </location>
</feature>
<feature type="transmembrane region" description="Helical" evidence="2">
    <location>
        <begin position="31"/>
        <end position="51"/>
    </location>
</feature>
<feature type="topological domain" description="Mitochondrial matrix" evidence="2">
    <location>
        <begin position="52"/>
        <end position="67"/>
    </location>
</feature>
<feature type="transmembrane region" description="Helical" evidence="2">
    <location>
        <begin position="68"/>
        <end position="94"/>
    </location>
</feature>
<feature type="topological domain" description="Mitochondrial intermembrane" evidence="2">
    <location>
        <begin position="95"/>
        <end position="237"/>
    </location>
</feature>
<feature type="binding site" evidence="1">
    <location>
        <position position="176"/>
    </location>
    <ligand>
        <name>Cu cation</name>
        <dbReference type="ChEBI" id="CHEBI:23378"/>
        <label>A1</label>
    </ligand>
</feature>
<feature type="binding site" evidence="1">
    <location>
        <position position="211"/>
    </location>
    <ligand>
        <name>Cu cation</name>
        <dbReference type="ChEBI" id="CHEBI:23378"/>
        <label>A1</label>
    </ligand>
</feature>
<feature type="binding site" evidence="1">
    <location>
        <position position="211"/>
    </location>
    <ligand>
        <name>Cu cation</name>
        <dbReference type="ChEBI" id="CHEBI:23378"/>
        <label>A2</label>
    </ligand>
</feature>
<feature type="binding site" evidence="1">
    <location>
        <position position="213"/>
    </location>
    <ligand>
        <name>Cu cation</name>
        <dbReference type="ChEBI" id="CHEBI:23378"/>
        <label>A2</label>
    </ligand>
</feature>
<feature type="binding site" evidence="1">
    <location>
        <position position="213"/>
    </location>
    <ligand>
        <name>Mg(2+)</name>
        <dbReference type="ChEBI" id="CHEBI:18420"/>
        <note>ligand shared with subunit 1</note>
    </ligand>
</feature>
<feature type="binding site" evidence="1">
    <location>
        <position position="215"/>
    </location>
    <ligand>
        <name>Cu cation</name>
        <dbReference type="ChEBI" id="CHEBI:23378"/>
        <label>A1</label>
    </ligand>
</feature>
<feature type="binding site" evidence="1">
    <location>
        <position position="215"/>
    </location>
    <ligand>
        <name>Cu cation</name>
        <dbReference type="ChEBI" id="CHEBI:23378"/>
        <label>A2</label>
    </ligand>
</feature>
<feature type="binding site" evidence="1">
    <location>
        <position position="219"/>
    </location>
    <ligand>
        <name>Cu cation</name>
        <dbReference type="ChEBI" id="CHEBI:23378"/>
        <label>A2</label>
    </ligand>
</feature>
<feature type="binding site" evidence="1">
    <location>
        <position position="222"/>
    </location>
    <ligand>
        <name>Cu cation</name>
        <dbReference type="ChEBI" id="CHEBI:23378"/>
        <label>A1</label>
    </ligand>
</feature>